<sequence>MGHKVHPTGIRLGIAKDWNSKWYASKADFAAYLAADLKVREMLRKKLAQAGISKILIERPAKTARVTIHTARPGVVIGKRGEDIEKLRKEVSEMMGVPAHINVTEVRKPELDAQLVAESIAQQLERRIMFRRAMKRSVGNAMRLGALGIKVNVAGRLNGAEIARSEWYREGRVPLHTLRADIDYGFAEASTTYGIIGIKVWIYKGEVFDFSQVGQEKQDDSPRNDRNDRGDRGDRPSRPAREAR</sequence>
<evidence type="ECO:0000255" key="1">
    <source>
        <dbReference type="HAMAP-Rule" id="MF_01309"/>
    </source>
</evidence>
<evidence type="ECO:0000256" key="2">
    <source>
        <dbReference type="SAM" id="MobiDB-lite"/>
    </source>
</evidence>
<evidence type="ECO:0000305" key="3"/>
<reference key="1">
    <citation type="journal article" date="2002" name="Nature">
        <title>Comparison of the genomes of two Xanthomonas pathogens with differing host specificities.</title>
        <authorList>
            <person name="da Silva A.C.R."/>
            <person name="Ferro J.A."/>
            <person name="Reinach F.C."/>
            <person name="Farah C.S."/>
            <person name="Furlan L.R."/>
            <person name="Quaggio R.B."/>
            <person name="Monteiro-Vitorello C.B."/>
            <person name="Van Sluys M.A."/>
            <person name="Almeida N.F. Jr."/>
            <person name="Alves L.M.C."/>
            <person name="do Amaral A.M."/>
            <person name="Bertolini M.C."/>
            <person name="Camargo L.E.A."/>
            <person name="Camarotte G."/>
            <person name="Cannavan F."/>
            <person name="Cardozo J."/>
            <person name="Chambergo F."/>
            <person name="Ciapina L.P."/>
            <person name="Cicarelli R.M.B."/>
            <person name="Coutinho L.L."/>
            <person name="Cursino-Santos J.R."/>
            <person name="El-Dorry H."/>
            <person name="Faria J.B."/>
            <person name="Ferreira A.J.S."/>
            <person name="Ferreira R.C.C."/>
            <person name="Ferro M.I.T."/>
            <person name="Formighieri E.F."/>
            <person name="Franco M.C."/>
            <person name="Greggio C.C."/>
            <person name="Gruber A."/>
            <person name="Katsuyama A.M."/>
            <person name="Kishi L.T."/>
            <person name="Leite R.P."/>
            <person name="Lemos E.G.M."/>
            <person name="Lemos M.V.F."/>
            <person name="Locali E.C."/>
            <person name="Machado M.A."/>
            <person name="Madeira A.M.B.N."/>
            <person name="Martinez-Rossi N.M."/>
            <person name="Martins E.C."/>
            <person name="Meidanis J."/>
            <person name="Menck C.F.M."/>
            <person name="Miyaki C.Y."/>
            <person name="Moon D.H."/>
            <person name="Moreira L.M."/>
            <person name="Novo M.T.M."/>
            <person name="Okura V.K."/>
            <person name="Oliveira M.C."/>
            <person name="Oliveira V.R."/>
            <person name="Pereira H.A."/>
            <person name="Rossi A."/>
            <person name="Sena J.A.D."/>
            <person name="Silva C."/>
            <person name="de Souza R.F."/>
            <person name="Spinola L.A.F."/>
            <person name="Takita M.A."/>
            <person name="Tamura R.E."/>
            <person name="Teixeira E.C."/>
            <person name="Tezza R.I.D."/>
            <person name="Trindade dos Santos M."/>
            <person name="Truffi D."/>
            <person name="Tsai S.M."/>
            <person name="White F.F."/>
            <person name="Setubal J.C."/>
            <person name="Kitajima J.P."/>
        </authorList>
    </citation>
    <scope>NUCLEOTIDE SEQUENCE [LARGE SCALE GENOMIC DNA]</scope>
    <source>
        <strain>ATCC 33913 / DSM 3586 / NCPPB 528 / LMG 568 / P 25</strain>
    </source>
</reference>
<comment type="function">
    <text evidence="1">Binds the lower part of the 30S subunit head. Binds mRNA in the 70S ribosome, positioning it for translation.</text>
</comment>
<comment type="subunit">
    <text evidence="1">Part of the 30S ribosomal subunit. Forms a tight complex with proteins S10 and S14.</text>
</comment>
<comment type="similarity">
    <text evidence="1">Belongs to the universal ribosomal protein uS3 family.</text>
</comment>
<keyword id="KW-1185">Reference proteome</keyword>
<keyword id="KW-0687">Ribonucleoprotein</keyword>
<keyword id="KW-0689">Ribosomal protein</keyword>
<keyword id="KW-0694">RNA-binding</keyword>
<keyword id="KW-0699">rRNA-binding</keyword>
<dbReference type="EMBL" id="AE008922">
    <property type="protein sequence ID" value="AAM40211.1"/>
    <property type="molecule type" value="Genomic_DNA"/>
</dbReference>
<dbReference type="RefSeq" id="NP_636287.1">
    <property type="nucleotide sequence ID" value="NC_003902.1"/>
</dbReference>
<dbReference type="RefSeq" id="WP_011036126.1">
    <property type="nucleotide sequence ID" value="NC_003902.1"/>
</dbReference>
<dbReference type="SMR" id="Q8PC44"/>
<dbReference type="STRING" id="190485.XCC0901"/>
<dbReference type="EnsemblBacteria" id="AAM40211">
    <property type="protein sequence ID" value="AAM40211"/>
    <property type="gene ID" value="XCC0901"/>
</dbReference>
<dbReference type="GeneID" id="58014523"/>
<dbReference type="KEGG" id="xcc:XCC0901"/>
<dbReference type="PATRIC" id="fig|190485.4.peg.973"/>
<dbReference type="eggNOG" id="COG0092">
    <property type="taxonomic scope" value="Bacteria"/>
</dbReference>
<dbReference type="HOGENOM" id="CLU_058591_0_2_6"/>
<dbReference type="OrthoDB" id="9806396at2"/>
<dbReference type="Proteomes" id="UP000001010">
    <property type="component" value="Chromosome"/>
</dbReference>
<dbReference type="GO" id="GO:0022627">
    <property type="term" value="C:cytosolic small ribosomal subunit"/>
    <property type="evidence" value="ECO:0000318"/>
    <property type="project" value="GO_Central"/>
</dbReference>
<dbReference type="GO" id="GO:0003729">
    <property type="term" value="F:mRNA binding"/>
    <property type="evidence" value="ECO:0007669"/>
    <property type="project" value="UniProtKB-UniRule"/>
</dbReference>
<dbReference type="GO" id="GO:0019843">
    <property type="term" value="F:rRNA binding"/>
    <property type="evidence" value="ECO:0007669"/>
    <property type="project" value="UniProtKB-UniRule"/>
</dbReference>
<dbReference type="GO" id="GO:0003735">
    <property type="term" value="F:structural constituent of ribosome"/>
    <property type="evidence" value="ECO:0000318"/>
    <property type="project" value="GO_Central"/>
</dbReference>
<dbReference type="GO" id="GO:0006412">
    <property type="term" value="P:translation"/>
    <property type="evidence" value="ECO:0007669"/>
    <property type="project" value="UniProtKB-UniRule"/>
</dbReference>
<dbReference type="CDD" id="cd02412">
    <property type="entry name" value="KH-II_30S_S3"/>
    <property type="match status" value="1"/>
</dbReference>
<dbReference type="FunFam" id="3.30.1140.32:FF:000001">
    <property type="entry name" value="30S ribosomal protein S3"/>
    <property type="match status" value="1"/>
</dbReference>
<dbReference type="FunFam" id="3.30.300.20:FF:000001">
    <property type="entry name" value="30S ribosomal protein S3"/>
    <property type="match status" value="1"/>
</dbReference>
<dbReference type="Gene3D" id="3.30.300.20">
    <property type="match status" value="1"/>
</dbReference>
<dbReference type="Gene3D" id="3.30.1140.32">
    <property type="entry name" value="Ribosomal protein S3, C-terminal domain"/>
    <property type="match status" value="1"/>
</dbReference>
<dbReference type="HAMAP" id="MF_01309_B">
    <property type="entry name" value="Ribosomal_uS3_B"/>
    <property type="match status" value="1"/>
</dbReference>
<dbReference type="InterPro" id="IPR004087">
    <property type="entry name" value="KH_dom"/>
</dbReference>
<dbReference type="InterPro" id="IPR015946">
    <property type="entry name" value="KH_dom-like_a/b"/>
</dbReference>
<dbReference type="InterPro" id="IPR004044">
    <property type="entry name" value="KH_dom_type_2"/>
</dbReference>
<dbReference type="InterPro" id="IPR009019">
    <property type="entry name" value="KH_sf_prok-type"/>
</dbReference>
<dbReference type="InterPro" id="IPR036419">
    <property type="entry name" value="Ribosomal_S3_C_sf"/>
</dbReference>
<dbReference type="InterPro" id="IPR005704">
    <property type="entry name" value="Ribosomal_uS3_bac-typ"/>
</dbReference>
<dbReference type="InterPro" id="IPR001351">
    <property type="entry name" value="Ribosomal_uS3_C"/>
</dbReference>
<dbReference type="InterPro" id="IPR018280">
    <property type="entry name" value="Ribosomal_uS3_CS"/>
</dbReference>
<dbReference type="NCBIfam" id="TIGR01009">
    <property type="entry name" value="rpsC_bact"/>
    <property type="match status" value="1"/>
</dbReference>
<dbReference type="PANTHER" id="PTHR11760">
    <property type="entry name" value="30S/40S RIBOSOMAL PROTEIN S3"/>
    <property type="match status" value="1"/>
</dbReference>
<dbReference type="PANTHER" id="PTHR11760:SF19">
    <property type="entry name" value="SMALL RIBOSOMAL SUBUNIT PROTEIN US3C"/>
    <property type="match status" value="1"/>
</dbReference>
<dbReference type="Pfam" id="PF07650">
    <property type="entry name" value="KH_2"/>
    <property type="match status" value="1"/>
</dbReference>
<dbReference type="Pfam" id="PF00189">
    <property type="entry name" value="Ribosomal_S3_C"/>
    <property type="match status" value="1"/>
</dbReference>
<dbReference type="SMART" id="SM00322">
    <property type="entry name" value="KH"/>
    <property type="match status" value="1"/>
</dbReference>
<dbReference type="SUPFAM" id="SSF54814">
    <property type="entry name" value="Prokaryotic type KH domain (KH-domain type II)"/>
    <property type="match status" value="1"/>
</dbReference>
<dbReference type="SUPFAM" id="SSF54821">
    <property type="entry name" value="Ribosomal protein S3 C-terminal domain"/>
    <property type="match status" value="1"/>
</dbReference>
<dbReference type="PROSITE" id="PS50823">
    <property type="entry name" value="KH_TYPE_2"/>
    <property type="match status" value="1"/>
</dbReference>
<dbReference type="PROSITE" id="PS00548">
    <property type="entry name" value="RIBOSOMAL_S3"/>
    <property type="match status" value="1"/>
</dbReference>
<name>RS3_XANCP</name>
<proteinExistence type="inferred from homology"/>
<gene>
    <name evidence="1" type="primary">rpsC</name>
    <name type="ordered locus">XCC0901</name>
</gene>
<protein>
    <recommendedName>
        <fullName evidence="1">Small ribosomal subunit protein uS3</fullName>
    </recommendedName>
    <alternativeName>
        <fullName evidence="3">30S ribosomal protein S3</fullName>
    </alternativeName>
</protein>
<accession>Q8PC44</accession>
<organism>
    <name type="scientific">Xanthomonas campestris pv. campestris (strain ATCC 33913 / DSM 3586 / NCPPB 528 / LMG 568 / P 25)</name>
    <dbReference type="NCBI Taxonomy" id="190485"/>
    <lineage>
        <taxon>Bacteria</taxon>
        <taxon>Pseudomonadati</taxon>
        <taxon>Pseudomonadota</taxon>
        <taxon>Gammaproteobacteria</taxon>
        <taxon>Lysobacterales</taxon>
        <taxon>Lysobacteraceae</taxon>
        <taxon>Xanthomonas</taxon>
    </lineage>
</organism>
<feature type="chain" id="PRO_0000130238" description="Small ribosomal subunit protein uS3">
    <location>
        <begin position="1"/>
        <end position="244"/>
    </location>
</feature>
<feature type="domain" description="KH type-2" evidence="1">
    <location>
        <begin position="39"/>
        <end position="107"/>
    </location>
</feature>
<feature type="region of interest" description="Disordered" evidence="2">
    <location>
        <begin position="213"/>
        <end position="244"/>
    </location>
</feature>
<feature type="compositionally biased region" description="Basic and acidic residues" evidence="2">
    <location>
        <begin position="216"/>
        <end position="244"/>
    </location>
</feature>